<accession>P03190</accession>
<accession>Q777G1</accession>
<name>RIR1_EBVB9</name>
<evidence type="ECO:0000255" key="1">
    <source>
        <dbReference type="HAMAP-Rule" id="MF_04026"/>
    </source>
</evidence>
<evidence type="ECO:0000256" key="2">
    <source>
        <dbReference type="SAM" id="MobiDB-lite"/>
    </source>
</evidence>
<evidence type="ECO:0007829" key="3">
    <source>
        <dbReference type="PDB" id="7RW6"/>
    </source>
</evidence>
<organism>
    <name type="scientific">Epstein-Barr virus (strain B95-8)</name>
    <name type="common">HHV-4</name>
    <name type="synonym">Human herpesvirus 4</name>
    <dbReference type="NCBI Taxonomy" id="10377"/>
    <lineage>
        <taxon>Viruses</taxon>
        <taxon>Duplodnaviria</taxon>
        <taxon>Heunggongvirae</taxon>
        <taxon>Peploviricota</taxon>
        <taxon>Herviviricetes</taxon>
        <taxon>Herpesvirales</taxon>
        <taxon>Orthoherpesviridae</taxon>
        <taxon>Gammaherpesvirinae</taxon>
        <taxon>Lymphocryptovirus</taxon>
        <taxon>Lymphocryptovirus humangamma4</taxon>
        <taxon>Epstein-Barr virus (strain GD1)</taxon>
    </lineage>
</organism>
<gene>
    <name evidence="1" type="primary">RIR1</name>
    <name type="ORF">BORF2</name>
</gene>
<proteinExistence type="evidence at protein level"/>
<comment type="function">
    <text evidence="1">Ribonucleoside-diphosphate reductase holoenzyme provides the precursors necessary for viral DNA synthesis. Allows virus growth in non-dividing cells, as well as reactivation from latency in infected hosts. Catalyzes the biosynthesis of deoxyribonucleotides from the corresponding ribonucleotides.</text>
</comment>
<comment type="catalytic activity">
    <reaction evidence="1">
        <text>a 2'-deoxyribonucleoside 5'-diphosphate + [thioredoxin]-disulfide + H2O = a ribonucleoside 5'-diphosphate + [thioredoxin]-dithiol</text>
        <dbReference type="Rhea" id="RHEA:23252"/>
        <dbReference type="Rhea" id="RHEA-COMP:10698"/>
        <dbReference type="Rhea" id="RHEA-COMP:10700"/>
        <dbReference type="ChEBI" id="CHEBI:15377"/>
        <dbReference type="ChEBI" id="CHEBI:29950"/>
        <dbReference type="ChEBI" id="CHEBI:50058"/>
        <dbReference type="ChEBI" id="CHEBI:57930"/>
        <dbReference type="ChEBI" id="CHEBI:73316"/>
        <dbReference type="EC" id="1.17.4.1"/>
    </reaction>
</comment>
<comment type="subunit">
    <text evidence="1">Heterotetramer composed of a homodimer of the large subunit (R1) and a homodimer of the small subunit (R2). Larger multisubunit protein complex are also active, composed of (R1)n(R2)n.</text>
</comment>
<comment type="similarity">
    <text evidence="1">Belongs to the ribonucleoside diphosphate reductase large chain family.</text>
</comment>
<reference key="1">
    <citation type="journal article" date="1984" name="Nature">
        <title>DNA sequence and expression of the B95-8 Epstein-Barr virus genome.</title>
        <authorList>
            <person name="Baer R."/>
            <person name="Bankier A.T."/>
            <person name="Biggin M.D."/>
            <person name="Deininger P.L."/>
            <person name="Farrell P.J."/>
            <person name="Gibson T.J."/>
            <person name="Hatfull G."/>
            <person name="Hudson G.S."/>
            <person name="Satchwell S.C."/>
            <person name="Seguin C."/>
            <person name="Tuffnell P.S."/>
            <person name="Barrell B.G."/>
        </authorList>
    </citation>
    <scope>NUCLEOTIDE SEQUENCE [LARGE SCALE GENOMIC DNA]</scope>
</reference>
<reference key="2">
    <citation type="journal article" date="2003" name="Virology">
        <title>Updated Epstein-Barr virus (EBV) DNA sequence and analysis of a promoter for the BART (CST, BARF0) RNAs of EBV.</title>
        <authorList>
            <person name="de Jesus O."/>
            <person name="Smith P.R."/>
            <person name="Spender L.C."/>
            <person name="Elgueta Karstegl C."/>
            <person name="Niller H.H."/>
            <person name="Huang D."/>
            <person name="Farrell P.J."/>
        </authorList>
    </citation>
    <scope>GENOME REANNOTATION</scope>
</reference>
<reference key="3">
    <citation type="journal article" date="1984" name="Nucleic Acids Res.">
        <title>Homology between two EBV early genes and HSV ribonucleotide reductase and 38K genes.</title>
        <authorList>
            <person name="Gibson T.J."/>
            <person name="Stockwell P."/>
            <person name="Ginsburg M."/>
            <person name="Barrell B.G."/>
        </authorList>
    </citation>
    <scope>IDENTIFICATION OF PROTEIN</scope>
</reference>
<reference key="4">
    <citation type="journal article" date="2004" name="Proc. Natl. Acad. Sci. U.S.A.">
        <title>Proteins of purified Epstein-Barr virus.</title>
        <authorList>
            <person name="Johannsen E."/>
            <person name="Luftig M."/>
            <person name="Chase M.R."/>
            <person name="Weicksel S."/>
            <person name="Cahir-McFarland E."/>
            <person name="Illanes D."/>
            <person name="Sarracino D."/>
            <person name="Kieff E."/>
        </authorList>
    </citation>
    <scope>SUBCELLULAR LOCATION</scope>
</reference>
<reference key="5">
    <citation type="journal article" date="2009" name="Trends Biochem. Sci.">
        <title>Tinkering with a viral ribonucleotide reductase.</title>
        <authorList>
            <person name="Lembo D."/>
            <person name="Brune W."/>
        </authorList>
    </citation>
    <scope>REVIEW</scope>
</reference>
<keyword id="KW-0002">3D-structure</keyword>
<keyword id="KW-0067">ATP-binding</keyword>
<keyword id="KW-1015">Disulfide bond</keyword>
<keyword id="KW-0235">DNA replication</keyword>
<keyword id="KW-0244">Early protein</keyword>
<keyword id="KW-0547">Nucleotide-binding</keyword>
<keyword id="KW-0560">Oxidoreductase</keyword>
<keyword id="KW-1185">Reference proteome</keyword>
<keyword id="KW-1251">Viral latency</keyword>
<keyword id="KW-1272">Viral reactivation from latency</keyword>
<protein>
    <recommendedName>
        <fullName evidence="1">Ribonucleoside-diphosphate reductase large subunit</fullName>
        <shortName evidence="1">R1</shortName>
        <ecNumber evidence="1">1.17.4.1</ecNumber>
    </recommendedName>
    <alternativeName>
        <fullName evidence="1">Ribonucleotide reductase large subunit</fullName>
    </alternativeName>
</protein>
<sequence length="826" mass="93031">MATTSHVEHELLSKLIDELKVKANSDPEADVLAGRLLHRLKAESVTHTVAEYLEVFSDKFYDEEFFQMHRDELETRVSAFAQSPAYERIVSSGYLSALRYYDTYLYVGRSGKQESVQHFYMRLAGFCASTTCLYAGLRAALQRARPEIESDMEVFDYYFEHLTSQTVCCSTPFMRFAGVENSTLASCILTTPDLSSEWDVTQALYRHLGRYLFQRAGVGVGVTGAGQDGKHISLLMRMINSHVEYHNYGCKRPVSVAAYMEPWHSQIFKFLETKLPENHERCPGIFTGLFVPELFFKLFRDTPWSDWYLFDPKDAGDLERLYGEEFEREYYRLVTAGKFCGRVSIKSLMFSIVNCAVKAGSPFILLKEACNAHFWRDLQGEAMNAANLCAEVLQPSRKSVATCNLANICLPRCLVNAPLAVRAQRADTQGDELLLALPRLSVTLPGEGAVGDGFSLARLRDATQCATFVVACSILQGSPTYDSRDMASMGLGVQGLADVFADLGWQYTDPPSRSLNKEIFEHMYFTALCTSSLIGLHTRKIFPGFKQSKYAGGWFHWHDWAGTDLSIPREIWSRLSERIVRDGLFNSQFIALMPTSGCAQVTGCSDAFYPFYANASTKVTNKEEALRPNRSFWRHVRLDDREALNLVGGRVSCLPEALRQRYLRFQTAFDYNQEDLIQMSRDRAPFVDQSQSHSLFLREEDAARASTLANLLVRSYELGLKTIMYYCRIEKAADLGVMECKASAALSVPREEQNERSPAEQMPPRPMEPAQVAGPVDIMSKGPGEGPGGWCVPGGLEVCYKYRQLFSEDDLLETDGFTERACESCQ</sequence>
<feature type="chain" id="PRO_0000187234" description="Ribonucleoside-diphosphate reductase large subunit">
    <location>
        <begin position="1"/>
        <end position="826"/>
    </location>
</feature>
<feature type="region of interest" description="Disordered" evidence="2">
    <location>
        <begin position="747"/>
        <end position="769"/>
    </location>
</feature>
<feature type="compositionally biased region" description="Basic and acidic residues" evidence="2">
    <location>
        <begin position="749"/>
        <end position="758"/>
    </location>
</feature>
<feature type="active site" description="Proton acceptor" evidence="1">
    <location>
        <position position="387"/>
    </location>
</feature>
<feature type="active site" description="Cysteine radical intermediate" evidence="1">
    <location>
        <position position="389"/>
    </location>
</feature>
<feature type="active site" description="Proton acceptor" evidence="1">
    <location>
        <position position="391"/>
    </location>
</feature>
<feature type="binding site" evidence="1">
    <location>
        <position position="171"/>
    </location>
    <ligand>
        <name>substrate</name>
    </ligand>
</feature>
<feature type="binding site" evidence="1">
    <location>
        <begin position="186"/>
        <end position="187"/>
    </location>
    <ligand>
        <name>substrate</name>
    </ligand>
</feature>
<feature type="binding site" evidence="1">
    <location>
        <position position="217"/>
    </location>
    <ligand>
        <name>substrate</name>
    </ligand>
</feature>
<feature type="binding site" evidence="1">
    <location>
        <begin position="387"/>
        <end position="391"/>
    </location>
    <ligand>
        <name>substrate</name>
    </ligand>
</feature>
<feature type="binding site" evidence="1">
    <location>
        <begin position="594"/>
        <end position="598"/>
    </location>
    <ligand>
        <name>substrate</name>
    </ligand>
</feature>
<feature type="site" description="Important for hydrogen atom transfer" evidence="1">
    <location>
        <position position="187"/>
    </location>
</feature>
<feature type="site" description="Important for hydrogen atom transfer" evidence="1">
    <location>
        <position position="403"/>
    </location>
</feature>
<feature type="site" description="Important for electron transfer" evidence="1">
    <location>
        <position position="725"/>
    </location>
</feature>
<feature type="site" description="Important for electron transfer" evidence="1">
    <location>
        <position position="726"/>
    </location>
</feature>
<feature type="site" description="Interacts with thioredoxin/glutaredoxin" evidence="1">
    <location>
        <position position="822"/>
    </location>
</feature>
<feature type="site" description="Interacts with thioredoxin/glutaredoxin" evidence="1">
    <location>
        <position position="825"/>
    </location>
</feature>
<feature type="disulfide bond" description="Redox-active" evidence="1">
    <location>
        <begin position="187"/>
        <end position="403"/>
    </location>
</feature>
<feature type="helix" evidence="3">
    <location>
        <begin position="8"/>
        <end position="20"/>
    </location>
</feature>
<feature type="turn" evidence="3">
    <location>
        <begin position="21"/>
        <end position="25"/>
    </location>
</feature>
<feature type="helix" evidence="3">
    <location>
        <begin position="27"/>
        <end position="40"/>
    </location>
</feature>
<feature type="helix" evidence="3">
    <location>
        <begin position="49"/>
        <end position="55"/>
    </location>
</feature>
<feature type="helix" evidence="3">
    <location>
        <begin position="57"/>
        <end position="60"/>
    </location>
</feature>
<feature type="helix" evidence="3">
    <location>
        <begin position="64"/>
        <end position="68"/>
    </location>
</feature>
<feature type="helix" evidence="3">
    <location>
        <begin position="70"/>
        <end position="82"/>
    </location>
</feature>
<feature type="helix" evidence="3">
    <location>
        <begin position="84"/>
        <end position="90"/>
    </location>
</feature>
<feature type="helix" evidence="3">
    <location>
        <begin position="94"/>
        <end position="102"/>
    </location>
</feature>
<feature type="helix" evidence="3">
    <location>
        <begin position="116"/>
        <end position="134"/>
    </location>
</feature>
<feature type="helix" evidence="3">
    <location>
        <begin position="137"/>
        <end position="144"/>
    </location>
</feature>
<feature type="helix" evidence="3">
    <location>
        <begin position="151"/>
        <end position="163"/>
    </location>
</feature>
<feature type="strand" evidence="3">
    <location>
        <begin position="166"/>
        <end position="169"/>
    </location>
</feature>
<feature type="helix" evidence="3">
    <location>
        <begin position="171"/>
        <end position="175"/>
    </location>
</feature>
<feature type="strand" evidence="3">
    <location>
        <begin position="176"/>
        <end position="179"/>
    </location>
</feature>
<feature type="strand" evidence="3">
    <location>
        <begin position="187"/>
        <end position="190"/>
    </location>
</feature>
<feature type="helix" evidence="3">
    <location>
        <begin position="209"/>
        <end position="212"/>
    </location>
</feature>
<feature type="strand" evidence="3">
    <location>
        <begin position="214"/>
        <end position="221"/>
    </location>
</feature>
<feature type="strand" evidence="3">
    <location>
        <begin position="256"/>
        <end position="260"/>
    </location>
</feature>
<feature type="helix" evidence="3">
    <location>
        <begin position="267"/>
        <end position="271"/>
    </location>
</feature>
<feature type="strand" evidence="3">
    <location>
        <begin position="285"/>
        <end position="291"/>
    </location>
</feature>
<feature type="helix" evidence="3">
    <location>
        <begin position="293"/>
        <end position="300"/>
    </location>
</feature>
<feature type="turn" evidence="3">
    <location>
        <begin position="312"/>
        <end position="314"/>
    </location>
</feature>
<feature type="turn" evidence="3">
    <location>
        <begin position="316"/>
        <end position="320"/>
    </location>
</feature>
<feature type="helix" evidence="3">
    <location>
        <begin position="324"/>
        <end position="335"/>
    </location>
</feature>
<feature type="helix" evidence="3">
    <location>
        <begin position="345"/>
        <end position="358"/>
    </location>
</feature>
<feature type="strand" evidence="3">
    <location>
        <begin position="362"/>
        <end position="366"/>
    </location>
</feature>
<feature type="helix" evidence="3">
    <location>
        <begin position="367"/>
        <end position="372"/>
    </location>
</feature>
<feature type="strand" evidence="3">
    <location>
        <begin position="374"/>
        <end position="376"/>
    </location>
</feature>
<feature type="strand" evidence="3">
    <location>
        <begin position="379"/>
        <end position="381"/>
    </location>
</feature>
<feature type="strand" evidence="3">
    <location>
        <begin position="397"/>
        <end position="399"/>
    </location>
</feature>
<feature type="strand" evidence="3">
    <location>
        <begin position="401"/>
        <end position="409"/>
    </location>
</feature>
<feature type="helix" evidence="3">
    <location>
        <begin position="410"/>
        <end position="413"/>
    </location>
</feature>
<feature type="helix" evidence="3">
    <location>
        <begin position="432"/>
        <end position="435"/>
    </location>
</feature>
<feature type="helix" evidence="3">
    <location>
        <begin position="458"/>
        <end position="477"/>
    </location>
</feature>
<feature type="helix" evidence="3">
    <location>
        <begin position="481"/>
        <end position="486"/>
    </location>
</feature>
<feature type="strand" evidence="3">
    <location>
        <begin position="488"/>
        <end position="494"/>
    </location>
</feature>
<feature type="helix" evidence="3">
    <location>
        <begin position="496"/>
        <end position="502"/>
    </location>
</feature>
<feature type="helix" evidence="3">
    <location>
        <begin position="510"/>
        <end position="538"/>
    </location>
</feature>
<feature type="helix" evidence="3">
    <location>
        <begin position="549"/>
        <end position="552"/>
    </location>
</feature>
<feature type="strand" evidence="3">
    <location>
        <begin position="560"/>
        <end position="562"/>
    </location>
</feature>
<feature type="helix" evidence="3">
    <location>
        <begin position="571"/>
        <end position="582"/>
    </location>
</feature>
<feature type="helix" evidence="3">
    <location>
        <begin position="598"/>
        <end position="602"/>
    </location>
</feature>
<feature type="helix" evidence="3">
    <location>
        <begin position="657"/>
        <end position="660"/>
    </location>
</feature>
<feature type="helix" evidence="3">
    <location>
        <begin position="663"/>
        <end position="665"/>
    </location>
</feature>
<feature type="turn" evidence="3">
    <location>
        <begin position="668"/>
        <end position="670"/>
    </location>
</feature>
<feature type="helix" evidence="3">
    <location>
        <begin position="673"/>
        <end position="683"/>
    </location>
</feature>
<feature type="helix" evidence="3">
    <location>
        <begin position="684"/>
        <end position="686"/>
    </location>
</feature>
<feature type="strand" evidence="3">
    <location>
        <begin position="695"/>
        <end position="697"/>
    </location>
</feature>
<feature type="turn" evidence="3">
    <location>
        <begin position="699"/>
        <end position="704"/>
    </location>
</feature>
<feature type="helix" evidence="3">
    <location>
        <begin position="707"/>
        <end position="717"/>
    </location>
</feature>
<feature type="strand" evidence="3">
    <location>
        <begin position="721"/>
        <end position="725"/>
    </location>
</feature>
<feature type="strand" evidence="3">
    <location>
        <begin position="727"/>
        <end position="729"/>
    </location>
</feature>
<organismHost>
    <name type="scientific">Homo sapiens</name>
    <name type="common">Human</name>
    <dbReference type="NCBI Taxonomy" id="9606"/>
</organismHost>
<dbReference type="EC" id="1.17.4.1" evidence="1"/>
<dbReference type="EMBL" id="V01555">
    <property type="protein sequence ID" value="CAA24842.1"/>
    <property type="molecule type" value="Genomic_DNA"/>
</dbReference>
<dbReference type="EMBL" id="AJ507799">
    <property type="protein sequence ID" value="CAD53405.1"/>
    <property type="molecule type" value="Genomic_DNA"/>
</dbReference>
<dbReference type="PIR" id="A03753">
    <property type="entry name" value="QQBE11"/>
</dbReference>
<dbReference type="RefSeq" id="YP_401655.1">
    <property type="nucleotide sequence ID" value="NC_007605.1"/>
</dbReference>
<dbReference type="PDB" id="7RW6">
    <property type="method" value="EM"/>
    <property type="resolution" value="2.55 A"/>
    <property type="chains" value="A/C=1-826"/>
</dbReference>
<dbReference type="PDBsum" id="7RW6"/>
<dbReference type="EMDB" id="EMD-24709"/>
<dbReference type="SMR" id="P03190"/>
<dbReference type="IntAct" id="P03190">
    <property type="interactions" value="2"/>
</dbReference>
<dbReference type="MINT" id="P03190"/>
<dbReference type="DNASU" id="3783725"/>
<dbReference type="GeneID" id="3783725"/>
<dbReference type="KEGG" id="vg:3783725"/>
<dbReference type="Proteomes" id="UP000153037">
    <property type="component" value="Segment"/>
</dbReference>
<dbReference type="GO" id="GO:0005524">
    <property type="term" value="F:ATP binding"/>
    <property type="evidence" value="ECO:0007669"/>
    <property type="project" value="UniProtKB-UniRule"/>
</dbReference>
<dbReference type="GO" id="GO:0004748">
    <property type="term" value="F:ribonucleoside-diphosphate reductase activity, thioredoxin disulfide as acceptor"/>
    <property type="evidence" value="ECO:0007669"/>
    <property type="project" value="UniProtKB-UniRule"/>
</dbReference>
<dbReference type="GO" id="GO:0009263">
    <property type="term" value="P:deoxyribonucleotide biosynthetic process"/>
    <property type="evidence" value="ECO:0007669"/>
    <property type="project" value="InterPro"/>
</dbReference>
<dbReference type="GO" id="GO:0006260">
    <property type="term" value="P:DNA replication"/>
    <property type="evidence" value="ECO:0007669"/>
    <property type="project" value="UniProtKB-KW"/>
</dbReference>
<dbReference type="GO" id="GO:0019046">
    <property type="term" value="P:release from viral latency"/>
    <property type="evidence" value="ECO:0007669"/>
    <property type="project" value="UniProtKB-KW"/>
</dbReference>
<dbReference type="Gene3D" id="3.20.70.20">
    <property type="match status" value="1"/>
</dbReference>
<dbReference type="HAMAP" id="MF_04026">
    <property type="entry name" value="HSV_RIR1"/>
    <property type="match status" value="1"/>
</dbReference>
<dbReference type="InterPro" id="IPR034717">
    <property type="entry name" value="HSV_RIR1"/>
</dbReference>
<dbReference type="InterPro" id="IPR013346">
    <property type="entry name" value="NrdE_NrdA_C"/>
</dbReference>
<dbReference type="InterPro" id="IPR000788">
    <property type="entry name" value="RNR_lg_C"/>
</dbReference>
<dbReference type="InterPro" id="IPR013509">
    <property type="entry name" value="RNR_lsu_N"/>
</dbReference>
<dbReference type="InterPro" id="IPR039718">
    <property type="entry name" value="Rrm1"/>
</dbReference>
<dbReference type="NCBIfam" id="TIGR02506">
    <property type="entry name" value="NrdE_NrdA"/>
    <property type="match status" value="1"/>
</dbReference>
<dbReference type="PANTHER" id="PTHR11573">
    <property type="entry name" value="RIBONUCLEOSIDE-DIPHOSPHATE REDUCTASE LARGE CHAIN"/>
    <property type="match status" value="1"/>
</dbReference>
<dbReference type="PANTHER" id="PTHR11573:SF6">
    <property type="entry name" value="RIBONUCLEOSIDE-DIPHOSPHATE REDUCTASE LARGE SUBUNIT"/>
    <property type="match status" value="1"/>
</dbReference>
<dbReference type="Pfam" id="PF02867">
    <property type="entry name" value="Ribonuc_red_lgC"/>
    <property type="match status" value="1"/>
</dbReference>
<dbReference type="Pfam" id="PF00317">
    <property type="entry name" value="Ribonuc_red_lgN"/>
    <property type="match status" value="1"/>
</dbReference>
<dbReference type="PRINTS" id="PR01183">
    <property type="entry name" value="RIBORDTASEM1"/>
</dbReference>
<dbReference type="SUPFAM" id="SSF51998">
    <property type="entry name" value="PFL-like glycyl radical enzymes"/>
    <property type="match status" value="1"/>
</dbReference>
<dbReference type="PROSITE" id="PS00089">
    <property type="entry name" value="RIBORED_LARGE"/>
    <property type="match status" value="1"/>
</dbReference>